<comment type="function">
    <text evidence="4 5 7">Transcription factor required for yeast cell adherence to silicone substrate. Plays a role in resistance to weak organic acids such as acetate and sorbate. Binds in vitro to a nitric oxide-responsive element (NORE) but seems not to be involved in response to nitrosative stress.</text>
</comment>
<comment type="subunit">
    <text evidence="1">Homodimer.</text>
</comment>
<comment type="subcellular location">
    <subcellularLocation>
        <location evidence="2">Nucleus</location>
    </subcellularLocation>
</comment>
<comment type="induction">
    <text evidence="6">Expression is induced in biofilm.</text>
</comment>
<comment type="disruption phenotype">
    <text evidence="4 7">Leads to sensitivity to weak organic acids and decreases cell adherence to silicone substrate.</text>
</comment>
<sequence length="947" mass="105854">MSDTTPEKGSVDSVSPSASNGSNTNNPLNNSSPQPLKSNESDKKPKVTRRSVACKSCHSLKVKCTPSDPNNPSAPCVRCINANRICEIDLNQTRKRRKKSEILEAKRQAGQSLPEHKKEKNTPTQSGYNSSENYSSSINNANDSSLTSRYQSPMTFDPTSPMVFRPQASSAVPPISSNLNPQSAAPTPIPTSGIPPQLPSPHESAILRGNTTSPTSKDDEINQLKQRVRFLETELANKRLLANKKGFSNDSPTDLQSPPFVSKFDLESEISILAESSARLTDLTNQLNEAASRRIQLVSAKKPVDLISKGVITVAEAEERLKLYREQIYGRHPLIAIPDNMHAIEFSQSQPFLFNSIMSACNLITKNADKDVVLAIDNEAMTSVAVEVMVVGTKSVELVKAFSVLCLYYNSPELFKQRRYHMLNTICVSLLHDVGIFARPTYSYNQADGTLKQDASSKDKGNDEYRELVLITYFVTVSTCLVLRRSIYARWTPYVEECCSLLENSSQEKHRRLALFARMNNKLDKIHHIVHAPEMPGQKSGVSQYVIQELQRLLSDLKLKIKDNQYSLLSYYYSIEAYLHEPILTKVFKSDTELDGKAMKSIRYCTSSCLNALDEYSKLTPDQIALLPFPFGSRIMYTAGMLLRLRYLILSLPSHIDKELVPKRAVTSIQCVSKLVEQANILNPHNHYLTKMRLVLQLFIQTYATQVLELLSKNGNTPQNFKPDESETQQLRALAREYNDIRKVSKVSLVSDTRSAEPLDVLSYAATFRRENNDKPSAVAGSLRKSFSENDQAIKTPSQCGQFVSANNTPVPQVINSPPISQTNVPVLHQSQSIINGNNRNSAPLAFNNTTTPSLHQFGDVLPPSSMPQPDYRQFRLPSISNTVHYSSNPRLNANLANPDQLENSYQVLNDEFWSNLLSTDSTDRINFTSNNFNGNTSNDEVFFMNN</sequence>
<gene>
    <name type="primary">WAR1</name>
    <name type="ordered locus">CAALFM_C103740WA</name>
    <name type="ORF">CaO19.1035</name>
    <name type="ORF">CaO19.8637</name>
</gene>
<protein>
    <recommendedName>
        <fullName>Transcriptional regulator WAR1</fullName>
    </recommendedName>
    <alternativeName>
        <fullName>Weak acid resistance protein 1</fullName>
    </alternativeName>
</protein>
<keyword id="KW-0130">Cell adhesion</keyword>
<keyword id="KW-0238">DNA-binding</keyword>
<keyword id="KW-0479">Metal-binding</keyword>
<keyword id="KW-0539">Nucleus</keyword>
<keyword id="KW-1185">Reference proteome</keyword>
<keyword id="KW-0346">Stress response</keyword>
<keyword id="KW-0804">Transcription</keyword>
<keyword id="KW-0805">Transcription regulation</keyword>
<keyword id="KW-0862">Zinc</keyword>
<proteinExistence type="evidence at protein level"/>
<reference key="1">
    <citation type="journal article" date="2004" name="Proc. Natl. Acad. Sci. U.S.A.">
        <title>The diploid genome sequence of Candida albicans.</title>
        <authorList>
            <person name="Jones T."/>
            <person name="Federspiel N.A."/>
            <person name="Chibana H."/>
            <person name="Dungan J."/>
            <person name="Kalman S."/>
            <person name="Magee B.B."/>
            <person name="Newport G."/>
            <person name="Thorstenson Y.R."/>
            <person name="Agabian N."/>
            <person name="Magee P.T."/>
            <person name="Davis R.W."/>
            <person name="Scherer S."/>
        </authorList>
    </citation>
    <scope>NUCLEOTIDE SEQUENCE [LARGE SCALE GENOMIC DNA]</scope>
    <source>
        <strain>SC5314 / ATCC MYA-2876</strain>
    </source>
</reference>
<reference key="2">
    <citation type="journal article" date="2007" name="Genome Biol.">
        <title>Assembly of the Candida albicans genome into sixteen supercontigs aligned on the eight chromosomes.</title>
        <authorList>
            <person name="van het Hoog M."/>
            <person name="Rast T.J."/>
            <person name="Martchenko M."/>
            <person name="Grindle S."/>
            <person name="Dignard D."/>
            <person name="Hogues H."/>
            <person name="Cuomo C."/>
            <person name="Berriman M."/>
            <person name="Scherer S."/>
            <person name="Magee B.B."/>
            <person name="Whiteway M."/>
            <person name="Chibana H."/>
            <person name="Nantel A."/>
            <person name="Magee P.T."/>
        </authorList>
    </citation>
    <scope>GENOME REANNOTATION</scope>
    <source>
        <strain>SC5314 / ATCC MYA-2876</strain>
    </source>
</reference>
<reference key="3">
    <citation type="journal article" date="2013" name="Genome Biol.">
        <title>Assembly of a phased diploid Candida albicans genome facilitates allele-specific measurements and provides a simple model for repeat and indel structure.</title>
        <authorList>
            <person name="Muzzey D."/>
            <person name="Schwartz K."/>
            <person name="Weissman J.S."/>
            <person name="Sherlock G."/>
        </authorList>
    </citation>
    <scope>NUCLEOTIDE SEQUENCE [LARGE SCALE GENOMIC DNA]</scope>
    <scope>GENOME REANNOTATION</scope>
    <source>
        <strain>SC5314 / ATCC MYA-2876</strain>
    </source>
</reference>
<reference key="4">
    <citation type="journal article" date="2005" name="Comp. Funct. Genomics">
        <title>In silico analysis for transcription factors with Zn(II)(2)C(6) binuclear cluster DNA-binding domains in Candida albicans.</title>
        <authorList>
            <person name="Maicas S."/>
            <person name="Moreno I."/>
            <person name="Nieto A."/>
            <person name="Gomez M."/>
            <person name="Sentandreu R."/>
            <person name="Valentin E."/>
        </authorList>
    </citation>
    <scope>IDENTIFICATION</scope>
</reference>
<reference key="5">
    <citation type="journal article" date="2006" name="Microbiol. Mol. Biol. Rev.">
        <title>A fungal family of transcriptional regulators: the zinc cluster proteins.</title>
        <authorList>
            <person name="MacPherson S."/>
            <person name="Larochelle M."/>
            <person name="Turcotte B."/>
        </authorList>
    </citation>
    <scope>IDENTIFICATION</scope>
</reference>
<reference key="6">
    <citation type="journal article" date="2006" name="Yeast">
        <title>New tools for phenotypic analysis in Candida albicans: the WAR1 gene confers resistance to sorbate.</title>
        <authorList>
            <person name="Lebel K."/>
            <person name="MacPherson S."/>
            <person name="Turcotte B."/>
        </authorList>
    </citation>
    <scope>FUNCTION</scope>
    <scope>DISRUPTION PHENOTYPE</scope>
</reference>
<reference key="7">
    <citation type="journal article" date="2008" name="Eukaryot. Cell">
        <title>CTA4 transcription factor mediates induction of nitrosative stress response in Candida albicans.</title>
        <authorList>
            <person name="Chiranand W."/>
            <person name="McLeod I."/>
            <person name="Zhou H."/>
            <person name="Lynn J.J."/>
            <person name="Vega L.A."/>
            <person name="Myers H."/>
            <person name="Yates J.R. III"/>
            <person name="Lorenz M.C."/>
            <person name="Gustin M.C."/>
        </authorList>
    </citation>
    <scope>FUNCTION</scope>
    <scope>DNA-BINDING</scope>
</reference>
<reference key="8">
    <citation type="journal article" date="2012" name="Cell">
        <title>A recently evolved transcriptional network controls biofilm development in Candida albicans.</title>
        <authorList>
            <person name="Nobile C.J."/>
            <person name="Fox E.P."/>
            <person name="Nett J.E."/>
            <person name="Sorrells T.R."/>
            <person name="Mitrovich Q.M."/>
            <person name="Hernday A.D."/>
            <person name="Tuch B.B."/>
            <person name="Andes D.R."/>
            <person name="Johnson A.D."/>
        </authorList>
    </citation>
    <scope>INDUCTION</scope>
</reference>
<reference key="9">
    <citation type="journal article" date="2012" name="PLoS Pathog.">
        <title>Portrait of Candida albicans adherence regulators.</title>
        <authorList>
            <person name="Finkel J.S."/>
            <person name="Xu W."/>
            <person name="Huang D."/>
            <person name="Hill E.M."/>
            <person name="Desai J.V."/>
            <person name="Woolford C.A."/>
            <person name="Nett J.E."/>
            <person name="Taff H."/>
            <person name="Norice C.T."/>
            <person name="Andes D.R."/>
            <person name="Lanni F."/>
            <person name="Mitchell A.P."/>
        </authorList>
    </citation>
    <scope>FUNCTION</scope>
    <scope>DISRUPTION PHENOTYPE</scope>
</reference>
<dbReference type="EMBL" id="CP017623">
    <property type="protein sequence ID" value="AOW26051.1"/>
    <property type="molecule type" value="Genomic_DNA"/>
</dbReference>
<dbReference type="RefSeq" id="XP_713640.2">
    <property type="nucleotide sequence ID" value="XM_708547.2"/>
</dbReference>
<dbReference type="FunCoup" id="Q59VQ8">
    <property type="interactions" value="238"/>
</dbReference>
<dbReference type="STRING" id="237561.Q59VQ8"/>
<dbReference type="EnsemblFungi" id="C1_03740W_A-T">
    <property type="protein sequence ID" value="C1_03740W_A-T-p1"/>
    <property type="gene ID" value="C1_03740W_A"/>
</dbReference>
<dbReference type="GeneID" id="3644691"/>
<dbReference type="KEGG" id="cal:CAALFM_C103740WA"/>
<dbReference type="CGD" id="CAL0000177698">
    <property type="gene designation" value="WAR1"/>
</dbReference>
<dbReference type="VEuPathDB" id="FungiDB:C1_03740W_A"/>
<dbReference type="eggNOG" id="ENOG502QRSG">
    <property type="taxonomic scope" value="Eukaryota"/>
</dbReference>
<dbReference type="HOGENOM" id="CLU_004837_1_0_1"/>
<dbReference type="InParanoid" id="Q59VQ8"/>
<dbReference type="OrthoDB" id="4454541at2759"/>
<dbReference type="PRO" id="PR:Q59VQ8"/>
<dbReference type="Proteomes" id="UP000000559">
    <property type="component" value="Chromosome 1"/>
</dbReference>
<dbReference type="GO" id="GO:0005634">
    <property type="term" value="C:nucleus"/>
    <property type="evidence" value="ECO:0000318"/>
    <property type="project" value="GO_Central"/>
</dbReference>
<dbReference type="GO" id="GO:0003700">
    <property type="term" value="F:DNA-binding transcription factor activity"/>
    <property type="evidence" value="ECO:0000266"/>
    <property type="project" value="CGD"/>
</dbReference>
<dbReference type="GO" id="GO:0000981">
    <property type="term" value="F:DNA-binding transcription factor activity, RNA polymerase II-specific"/>
    <property type="evidence" value="ECO:0000318"/>
    <property type="project" value="GO_Central"/>
</dbReference>
<dbReference type="GO" id="GO:0000976">
    <property type="term" value="F:transcription cis-regulatory region binding"/>
    <property type="evidence" value="ECO:0000318"/>
    <property type="project" value="GO_Central"/>
</dbReference>
<dbReference type="GO" id="GO:0008270">
    <property type="term" value="F:zinc ion binding"/>
    <property type="evidence" value="ECO:0007669"/>
    <property type="project" value="InterPro"/>
</dbReference>
<dbReference type="GO" id="GO:0007155">
    <property type="term" value="P:cell adhesion"/>
    <property type="evidence" value="ECO:0007669"/>
    <property type="project" value="UniProtKB-KW"/>
</dbReference>
<dbReference type="GO" id="GO:0071311">
    <property type="term" value="P:cellular response to acetate"/>
    <property type="evidence" value="ECO:0000315"/>
    <property type="project" value="CGD"/>
</dbReference>
<dbReference type="GO" id="GO:1900189">
    <property type="term" value="P:positive regulation of cell adhesion involved in single-species biofilm formation"/>
    <property type="evidence" value="ECO:0000315"/>
    <property type="project" value="CGD"/>
</dbReference>
<dbReference type="GO" id="GO:0010811">
    <property type="term" value="P:positive regulation of cell-substrate adhesion"/>
    <property type="evidence" value="ECO:0000315"/>
    <property type="project" value="CGD"/>
</dbReference>
<dbReference type="GO" id="GO:0006355">
    <property type="term" value="P:regulation of DNA-templated transcription"/>
    <property type="evidence" value="ECO:0000266"/>
    <property type="project" value="CGD"/>
</dbReference>
<dbReference type="GO" id="GO:0006357">
    <property type="term" value="P:regulation of transcription by RNA polymerase II"/>
    <property type="evidence" value="ECO:0000315"/>
    <property type="project" value="CGD"/>
</dbReference>
<dbReference type="GO" id="GO:0044011">
    <property type="term" value="P:single-species biofilm formation on inanimate substrate"/>
    <property type="evidence" value="ECO:0000315"/>
    <property type="project" value="CGD"/>
</dbReference>
<dbReference type="CDD" id="cd00067">
    <property type="entry name" value="GAL4"/>
    <property type="match status" value="1"/>
</dbReference>
<dbReference type="Gene3D" id="4.10.240.10">
    <property type="entry name" value="Zn(2)-C6 fungal-type DNA-binding domain"/>
    <property type="match status" value="1"/>
</dbReference>
<dbReference type="InterPro" id="IPR051089">
    <property type="entry name" value="prtT"/>
</dbReference>
<dbReference type="InterPro" id="IPR036864">
    <property type="entry name" value="Zn2-C6_fun-type_DNA-bd_sf"/>
</dbReference>
<dbReference type="InterPro" id="IPR001138">
    <property type="entry name" value="Zn2Cys6_DnaBD"/>
</dbReference>
<dbReference type="PANTHER" id="PTHR31845">
    <property type="entry name" value="FINGER DOMAIN PROTEIN, PUTATIVE-RELATED"/>
    <property type="match status" value="1"/>
</dbReference>
<dbReference type="PANTHER" id="PTHR31845:SF10">
    <property type="entry name" value="ZN(II)2CYS6 TRANSCRIPTION FACTOR (EUROFUNG)"/>
    <property type="match status" value="1"/>
</dbReference>
<dbReference type="SMART" id="SM00066">
    <property type="entry name" value="GAL4"/>
    <property type="match status" value="1"/>
</dbReference>
<dbReference type="SUPFAM" id="SSF57701">
    <property type="entry name" value="Zn2/Cys6 DNA-binding domain"/>
    <property type="match status" value="1"/>
</dbReference>
<dbReference type="PROSITE" id="PS00463">
    <property type="entry name" value="ZN2_CY6_FUNGAL_1"/>
    <property type="match status" value="1"/>
</dbReference>
<dbReference type="PROSITE" id="PS50048">
    <property type="entry name" value="ZN2_CY6_FUNGAL_2"/>
    <property type="match status" value="1"/>
</dbReference>
<accession>Q59VQ8</accession>
<accession>A0A1D8PD27</accession>
<accession>Q59VV4</accession>
<organism>
    <name type="scientific">Candida albicans (strain SC5314 / ATCC MYA-2876)</name>
    <name type="common">Yeast</name>
    <dbReference type="NCBI Taxonomy" id="237561"/>
    <lineage>
        <taxon>Eukaryota</taxon>
        <taxon>Fungi</taxon>
        <taxon>Dikarya</taxon>
        <taxon>Ascomycota</taxon>
        <taxon>Saccharomycotina</taxon>
        <taxon>Pichiomycetes</taxon>
        <taxon>Debaryomycetaceae</taxon>
        <taxon>Candida/Lodderomyces clade</taxon>
        <taxon>Candida</taxon>
    </lineage>
</organism>
<evidence type="ECO:0000250" key="1"/>
<evidence type="ECO:0000255" key="2">
    <source>
        <dbReference type="PROSITE-ProRule" id="PRU00227"/>
    </source>
</evidence>
<evidence type="ECO:0000256" key="3">
    <source>
        <dbReference type="SAM" id="MobiDB-lite"/>
    </source>
</evidence>
<evidence type="ECO:0000269" key="4">
    <source>
    </source>
</evidence>
<evidence type="ECO:0000269" key="5">
    <source>
    </source>
</evidence>
<evidence type="ECO:0000269" key="6">
    <source>
    </source>
</evidence>
<evidence type="ECO:0000269" key="7">
    <source>
    </source>
</evidence>
<name>WAR1_CANAL</name>
<feature type="chain" id="PRO_0000426087" description="Transcriptional regulator WAR1">
    <location>
        <begin position="1"/>
        <end position="947"/>
    </location>
</feature>
<feature type="DNA-binding region" description="Zn(2)-C6 fungal-type" evidence="2">
    <location>
        <begin position="54"/>
        <end position="86"/>
    </location>
</feature>
<feature type="region of interest" description="Disordered" evidence="3">
    <location>
        <begin position="1"/>
        <end position="52"/>
    </location>
</feature>
<feature type="region of interest" description="Disordered" evidence="3">
    <location>
        <begin position="96"/>
        <end position="222"/>
    </location>
</feature>
<feature type="compositionally biased region" description="Basic and acidic residues" evidence="3">
    <location>
        <begin position="1"/>
        <end position="10"/>
    </location>
</feature>
<feature type="compositionally biased region" description="Low complexity" evidence="3">
    <location>
        <begin position="19"/>
        <end position="38"/>
    </location>
</feature>
<feature type="compositionally biased region" description="Low complexity" evidence="3">
    <location>
        <begin position="129"/>
        <end position="142"/>
    </location>
</feature>
<feature type="compositionally biased region" description="Polar residues" evidence="3">
    <location>
        <begin position="143"/>
        <end position="158"/>
    </location>
</feature>
<feature type="compositionally biased region" description="Polar residues" evidence="3">
    <location>
        <begin position="167"/>
        <end position="185"/>
    </location>
</feature>